<protein>
    <recommendedName>
        <fullName evidence="1">tRNA pseudouridine synthase A</fullName>
        <ecNumber evidence="1">5.4.99.12</ecNumber>
    </recommendedName>
    <alternativeName>
        <fullName evidence="1">tRNA pseudouridine(38-40) synthase</fullName>
    </alternativeName>
    <alternativeName>
        <fullName evidence="1">tRNA pseudouridylate synthase I</fullName>
    </alternativeName>
    <alternativeName>
        <fullName evidence="1">tRNA-uridine isomerase I</fullName>
    </alternativeName>
</protein>
<gene>
    <name evidence="1" type="primary">truA</name>
    <name type="ordered locus">gbs0099</name>
</gene>
<accession>Q8E7Q5</accession>
<organism>
    <name type="scientific">Streptococcus agalactiae serotype III (strain NEM316)</name>
    <dbReference type="NCBI Taxonomy" id="211110"/>
    <lineage>
        <taxon>Bacteria</taxon>
        <taxon>Bacillati</taxon>
        <taxon>Bacillota</taxon>
        <taxon>Bacilli</taxon>
        <taxon>Lactobacillales</taxon>
        <taxon>Streptococcaceae</taxon>
        <taxon>Streptococcus</taxon>
    </lineage>
</organism>
<evidence type="ECO:0000255" key="1">
    <source>
        <dbReference type="HAMAP-Rule" id="MF_00171"/>
    </source>
</evidence>
<proteinExistence type="inferred from homology"/>
<feature type="chain" id="PRO_0000057457" description="tRNA pseudouridine synthase A">
    <location>
        <begin position="1"/>
        <end position="258"/>
    </location>
</feature>
<feature type="active site" description="Nucleophile" evidence="1">
    <location>
        <position position="53"/>
    </location>
</feature>
<feature type="binding site" evidence="1">
    <location>
        <position position="111"/>
    </location>
    <ligand>
        <name>substrate</name>
    </ligand>
</feature>
<name>TRUA_STRA3</name>
<keyword id="KW-0413">Isomerase</keyword>
<keyword id="KW-0819">tRNA processing</keyword>
<comment type="function">
    <text evidence="1">Formation of pseudouridine at positions 38, 39 and 40 in the anticodon stem and loop of transfer RNAs.</text>
</comment>
<comment type="catalytic activity">
    <reaction evidence="1">
        <text>uridine(38/39/40) in tRNA = pseudouridine(38/39/40) in tRNA</text>
        <dbReference type="Rhea" id="RHEA:22376"/>
        <dbReference type="Rhea" id="RHEA-COMP:10085"/>
        <dbReference type="Rhea" id="RHEA-COMP:10087"/>
        <dbReference type="ChEBI" id="CHEBI:65314"/>
        <dbReference type="ChEBI" id="CHEBI:65315"/>
        <dbReference type="EC" id="5.4.99.12"/>
    </reaction>
</comment>
<comment type="subunit">
    <text evidence="1">Homodimer.</text>
</comment>
<comment type="similarity">
    <text evidence="1">Belongs to the tRNA pseudouridine synthase TruA family.</text>
</comment>
<dbReference type="EC" id="5.4.99.12" evidence="1"/>
<dbReference type="EMBL" id="AL766843">
    <property type="protein sequence ID" value="CAD45744.1"/>
    <property type="molecule type" value="Genomic_DNA"/>
</dbReference>
<dbReference type="RefSeq" id="WP_000199165.1">
    <property type="nucleotide sequence ID" value="NC_004368.1"/>
</dbReference>
<dbReference type="SMR" id="Q8E7Q5"/>
<dbReference type="KEGG" id="san:gbs0099"/>
<dbReference type="eggNOG" id="COG0101">
    <property type="taxonomic scope" value="Bacteria"/>
</dbReference>
<dbReference type="HOGENOM" id="CLU_014673_0_1_9"/>
<dbReference type="Proteomes" id="UP000000823">
    <property type="component" value="Chromosome"/>
</dbReference>
<dbReference type="GO" id="GO:0003723">
    <property type="term" value="F:RNA binding"/>
    <property type="evidence" value="ECO:0007669"/>
    <property type="project" value="InterPro"/>
</dbReference>
<dbReference type="GO" id="GO:0160147">
    <property type="term" value="F:tRNA pseudouridine(38-40) synthase activity"/>
    <property type="evidence" value="ECO:0007669"/>
    <property type="project" value="UniProtKB-EC"/>
</dbReference>
<dbReference type="GO" id="GO:0031119">
    <property type="term" value="P:tRNA pseudouridine synthesis"/>
    <property type="evidence" value="ECO:0007669"/>
    <property type="project" value="UniProtKB-UniRule"/>
</dbReference>
<dbReference type="CDD" id="cd02570">
    <property type="entry name" value="PseudoU_synth_EcTruA"/>
    <property type="match status" value="1"/>
</dbReference>
<dbReference type="FunFam" id="3.30.70.580:FF:000001">
    <property type="entry name" value="tRNA pseudouridine synthase A"/>
    <property type="match status" value="1"/>
</dbReference>
<dbReference type="Gene3D" id="3.30.70.660">
    <property type="entry name" value="Pseudouridine synthase I, catalytic domain, C-terminal subdomain"/>
    <property type="match status" value="1"/>
</dbReference>
<dbReference type="Gene3D" id="3.30.70.580">
    <property type="entry name" value="Pseudouridine synthase I, catalytic domain, N-terminal subdomain"/>
    <property type="match status" value="1"/>
</dbReference>
<dbReference type="HAMAP" id="MF_00171">
    <property type="entry name" value="TruA"/>
    <property type="match status" value="1"/>
</dbReference>
<dbReference type="InterPro" id="IPR020103">
    <property type="entry name" value="PsdUridine_synth_cat_dom_sf"/>
</dbReference>
<dbReference type="InterPro" id="IPR001406">
    <property type="entry name" value="PsdUridine_synth_TruA"/>
</dbReference>
<dbReference type="InterPro" id="IPR020097">
    <property type="entry name" value="PsdUridine_synth_TruA_a/b_dom"/>
</dbReference>
<dbReference type="InterPro" id="IPR020095">
    <property type="entry name" value="PsdUridine_synth_TruA_C"/>
</dbReference>
<dbReference type="InterPro" id="IPR020094">
    <property type="entry name" value="TruA/RsuA/RluB/E/F_N"/>
</dbReference>
<dbReference type="NCBIfam" id="TIGR00071">
    <property type="entry name" value="hisT_truA"/>
    <property type="match status" value="1"/>
</dbReference>
<dbReference type="PANTHER" id="PTHR11142">
    <property type="entry name" value="PSEUDOURIDYLATE SYNTHASE"/>
    <property type="match status" value="1"/>
</dbReference>
<dbReference type="PANTHER" id="PTHR11142:SF0">
    <property type="entry name" value="TRNA PSEUDOURIDINE SYNTHASE-LIKE 1"/>
    <property type="match status" value="1"/>
</dbReference>
<dbReference type="Pfam" id="PF01416">
    <property type="entry name" value="PseudoU_synth_1"/>
    <property type="match status" value="2"/>
</dbReference>
<dbReference type="PIRSF" id="PIRSF001430">
    <property type="entry name" value="tRNA_psdUrid_synth"/>
    <property type="match status" value="1"/>
</dbReference>
<dbReference type="SUPFAM" id="SSF55120">
    <property type="entry name" value="Pseudouridine synthase"/>
    <property type="match status" value="1"/>
</dbReference>
<sequence length="258" mass="29343">MTRYKAQISYDGSAFSGFQRQPNCRTVQEEIERTLKRLNSGNDVIIHGAGRTDAGVHAYGQVIHFDLPQARDVEKLRFGLDTQCPDDIDIVKVEQVSDDFHCRYDKHIKTYEFLVDIGRPKNPMMRNYATHYPYPVIIELMQEAIKDLVGTHDFTGFTASGTSVENKVRTIFDAKIQFEASKNLLIFTFTGNGFLYKQVRNMVGTLLKIGNGRMPISQIKTILQAKNRDLAGPTAAGNGLYLKEIIYEDKECFSNFRK</sequence>
<reference key="1">
    <citation type="journal article" date="2002" name="Mol. Microbiol.">
        <title>Genome sequence of Streptococcus agalactiae, a pathogen causing invasive neonatal disease.</title>
        <authorList>
            <person name="Glaser P."/>
            <person name="Rusniok C."/>
            <person name="Buchrieser C."/>
            <person name="Chevalier F."/>
            <person name="Frangeul L."/>
            <person name="Msadek T."/>
            <person name="Zouine M."/>
            <person name="Couve E."/>
            <person name="Lalioui L."/>
            <person name="Poyart C."/>
            <person name="Trieu-Cuot P."/>
            <person name="Kunst F."/>
        </authorList>
    </citation>
    <scope>NUCLEOTIDE SEQUENCE [LARGE SCALE GENOMIC DNA]</scope>
    <source>
        <strain>NEM316</strain>
    </source>
</reference>